<name>Y1304_LISMO</name>
<evidence type="ECO:0000255" key="1">
    <source>
        <dbReference type="HAMAP-Rule" id="MF_01103"/>
    </source>
</evidence>
<evidence type="ECO:0000256" key="2">
    <source>
        <dbReference type="SAM" id="MobiDB-lite"/>
    </source>
</evidence>
<dbReference type="EMBL" id="AL591978">
    <property type="protein sequence ID" value="CAC99382.1"/>
    <property type="molecule type" value="Genomic_DNA"/>
</dbReference>
<dbReference type="PIR" id="AH1237">
    <property type="entry name" value="AH1237"/>
</dbReference>
<dbReference type="RefSeq" id="NP_464829.1">
    <property type="nucleotide sequence ID" value="NC_003210.1"/>
</dbReference>
<dbReference type="RefSeq" id="WP_003723440.1">
    <property type="nucleotide sequence ID" value="NZ_CP149495.1"/>
</dbReference>
<dbReference type="SMR" id="Q8Y7H5"/>
<dbReference type="STRING" id="169963.gene:17593961"/>
<dbReference type="PaxDb" id="169963-lmo1304"/>
<dbReference type="EnsemblBacteria" id="CAC99382">
    <property type="protein sequence ID" value="CAC99382"/>
    <property type="gene ID" value="CAC99382"/>
</dbReference>
<dbReference type="GeneID" id="987682"/>
<dbReference type="KEGG" id="lmo:lmo1304"/>
<dbReference type="PATRIC" id="fig|169963.11.peg.1340"/>
<dbReference type="eggNOG" id="COG4224">
    <property type="taxonomic scope" value="Bacteria"/>
</dbReference>
<dbReference type="HOGENOM" id="CLU_173137_0_2_9"/>
<dbReference type="OrthoDB" id="390105at2"/>
<dbReference type="PhylomeDB" id="Q8Y7H5"/>
<dbReference type="BioCyc" id="LMON169963:LMO1304-MONOMER"/>
<dbReference type="Proteomes" id="UP000000817">
    <property type="component" value="Chromosome"/>
</dbReference>
<dbReference type="GO" id="GO:0005737">
    <property type="term" value="C:cytoplasm"/>
    <property type="evidence" value="ECO:0007669"/>
    <property type="project" value="UniProtKB-SubCell"/>
</dbReference>
<dbReference type="Gene3D" id="1.10.287.540">
    <property type="entry name" value="Helix hairpin bin"/>
    <property type="match status" value="1"/>
</dbReference>
<dbReference type="HAMAP" id="MF_01103">
    <property type="entry name" value="UPF0291"/>
    <property type="match status" value="1"/>
</dbReference>
<dbReference type="InterPro" id="IPR009242">
    <property type="entry name" value="DUF896"/>
</dbReference>
<dbReference type="PANTHER" id="PTHR37300">
    <property type="entry name" value="UPF0291 PROTEIN CBO2609/CLC_2481"/>
    <property type="match status" value="1"/>
</dbReference>
<dbReference type="PANTHER" id="PTHR37300:SF1">
    <property type="entry name" value="UPF0291 PROTEIN YNZC"/>
    <property type="match status" value="1"/>
</dbReference>
<dbReference type="Pfam" id="PF05979">
    <property type="entry name" value="DUF896"/>
    <property type="match status" value="1"/>
</dbReference>
<dbReference type="SUPFAM" id="SSF158221">
    <property type="entry name" value="YnzC-like"/>
    <property type="match status" value="1"/>
</dbReference>
<sequence>MLEKAKIDRINELSKKKKAGTLTSAEKVEQDKLRKEYIKSFRTHMKGTIENTTIIDPNGKDVTPHKVKQLRKNKY</sequence>
<accession>Q8Y7H5</accession>
<protein>
    <recommendedName>
        <fullName evidence="1">UPF0291 protein lmo1304</fullName>
    </recommendedName>
</protein>
<organism>
    <name type="scientific">Listeria monocytogenes serovar 1/2a (strain ATCC BAA-679 / EGD-e)</name>
    <dbReference type="NCBI Taxonomy" id="169963"/>
    <lineage>
        <taxon>Bacteria</taxon>
        <taxon>Bacillati</taxon>
        <taxon>Bacillota</taxon>
        <taxon>Bacilli</taxon>
        <taxon>Bacillales</taxon>
        <taxon>Listeriaceae</taxon>
        <taxon>Listeria</taxon>
    </lineage>
</organism>
<reference key="1">
    <citation type="journal article" date="2001" name="Science">
        <title>Comparative genomics of Listeria species.</title>
        <authorList>
            <person name="Glaser P."/>
            <person name="Frangeul L."/>
            <person name="Buchrieser C."/>
            <person name="Rusniok C."/>
            <person name="Amend A."/>
            <person name="Baquero F."/>
            <person name="Berche P."/>
            <person name="Bloecker H."/>
            <person name="Brandt P."/>
            <person name="Chakraborty T."/>
            <person name="Charbit A."/>
            <person name="Chetouani F."/>
            <person name="Couve E."/>
            <person name="de Daruvar A."/>
            <person name="Dehoux P."/>
            <person name="Domann E."/>
            <person name="Dominguez-Bernal G."/>
            <person name="Duchaud E."/>
            <person name="Durant L."/>
            <person name="Dussurget O."/>
            <person name="Entian K.-D."/>
            <person name="Fsihi H."/>
            <person name="Garcia-del Portillo F."/>
            <person name="Garrido P."/>
            <person name="Gautier L."/>
            <person name="Goebel W."/>
            <person name="Gomez-Lopez N."/>
            <person name="Hain T."/>
            <person name="Hauf J."/>
            <person name="Jackson D."/>
            <person name="Jones L.-M."/>
            <person name="Kaerst U."/>
            <person name="Kreft J."/>
            <person name="Kuhn M."/>
            <person name="Kunst F."/>
            <person name="Kurapkat G."/>
            <person name="Madueno E."/>
            <person name="Maitournam A."/>
            <person name="Mata Vicente J."/>
            <person name="Ng E."/>
            <person name="Nedjari H."/>
            <person name="Nordsiek G."/>
            <person name="Novella S."/>
            <person name="de Pablos B."/>
            <person name="Perez-Diaz J.-C."/>
            <person name="Purcell R."/>
            <person name="Remmel B."/>
            <person name="Rose M."/>
            <person name="Schlueter T."/>
            <person name="Simoes N."/>
            <person name="Tierrez A."/>
            <person name="Vazquez-Boland J.-A."/>
            <person name="Voss H."/>
            <person name="Wehland J."/>
            <person name="Cossart P."/>
        </authorList>
    </citation>
    <scope>NUCLEOTIDE SEQUENCE [LARGE SCALE GENOMIC DNA]</scope>
    <source>
        <strain>ATCC BAA-679 / EGD-e</strain>
    </source>
</reference>
<comment type="subcellular location">
    <subcellularLocation>
        <location evidence="1">Cytoplasm</location>
    </subcellularLocation>
</comment>
<comment type="similarity">
    <text evidence="1">Belongs to the UPF0291 family.</text>
</comment>
<feature type="chain" id="PRO_0000094981" description="UPF0291 protein lmo1304">
    <location>
        <begin position="1"/>
        <end position="75"/>
    </location>
</feature>
<feature type="region of interest" description="Disordered" evidence="2">
    <location>
        <begin position="56"/>
        <end position="75"/>
    </location>
</feature>
<feature type="compositionally biased region" description="Basic residues" evidence="2">
    <location>
        <begin position="65"/>
        <end position="75"/>
    </location>
</feature>
<keyword id="KW-0963">Cytoplasm</keyword>
<keyword id="KW-1185">Reference proteome</keyword>
<gene>
    <name type="ordered locus">lmo1304</name>
</gene>
<proteinExistence type="inferred from homology"/>